<accession>A0A8J9RRX1</accession>
<evidence type="ECO:0000255" key="1">
    <source>
        <dbReference type="PROSITE-ProRule" id="PRU00227"/>
    </source>
</evidence>
<evidence type="ECO:0000256" key="2">
    <source>
        <dbReference type="SAM" id="MobiDB-lite"/>
    </source>
</evidence>
<evidence type="ECO:0000269" key="3">
    <source>
    </source>
</evidence>
<evidence type="ECO:0000303" key="4">
    <source>
    </source>
</evidence>
<evidence type="ECO:0000305" key="5">
    <source>
    </source>
</evidence>
<comment type="function">
    <text evidence="3 5">Transcription factor; part of the gene cluster that mediates the biosynthesis of the phomopsins, a group of hexapeptide mycotoxins which infects lupins and causes lupinosis disease in livestock (PubMed:34608734). May play a role in the regulation of the production of phomopsins (Probable).</text>
</comment>
<comment type="subcellular location">
    <subcellularLocation>
        <location evidence="1">Nucleus</location>
    </subcellularLocation>
</comment>
<name>PHOD1_DIALO</name>
<proteinExistence type="inferred from homology"/>
<sequence length="469" mass="51040">MVVDGKTTRLRASCNACNESKVRCSQRKPTCARCERNGVECIYGLSRRTHKDAPPISMPPSQRSHNHPRGASRSSSSGGDTKANSNSSSNWHMSPNVPFMIPPQQQQQQQKEEAAAAAAATPRFQCMYTPQDATADTVNRAGLLLDMDFSSLVTGSSSPLTSVDPLSAAVTRFPTPGAEHTNPWALGPFFGGNTNNNSINNPDWTRQPTTMGPMITVPTTAPPSPSPSCTECSCHAGVTELLSSMRGGGDDRRLSLDAQLAKLKRCIVSSETSMGCAHGRDDAEPIHILAVSTLIGYVIDEFEMLASESPLRLSSSLADMSGSRNAERVAESILSSGSDESMSMSSMAATTGVNNMSMSMSMGNLLEPRLSWGVLELEDDDEVDLRQRLYLLSFRKLERLLSQLTIYLRNLHDARAGLPEPSRHMAFVMACDYTRLWLEKKAEDVKRMFLVARPAGDETMDPALMFTAH</sequence>
<keyword id="KW-0238">DNA-binding</keyword>
<keyword id="KW-0479">Metal-binding</keyword>
<keyword id="KW-0539">Nucleus</keyword>
<keyword id="KW-0804">Transcription</keyword>
<keyword id="KW-0805">Transcription regulation</keyword>
<keyword id="KW-0843">Virulence</keyword>
<keyword id="KW-0862">Zinc</keyword>
<feature type="chain" id="PRO_0000458396" description="Transcription factor phomD">
    <location>
        <begin position="1"/>
        <end position="469"/>
    </location>
</feature>
<feature type="DNA-binding region" description="Zn(2)-C6 fungal-type" evidence="1">
    <location>
        <begin position="14"/>
        <end position="41"/>
    </location>
</feature>
<feature type="region of interest" description="Disordered" evidence="2">
    <location>
        <begin position="49"/>
        <end position="118"/>
    </location>
</feature>
<feature type="compositionally biased region" description="Polar residues" evidence="2">
    <location>
        <begin position="82"/>
        <end position="93"/>
    </location>
</feature>
<feature type="compositionally biased region" description="Low complexity" evidence="2">
    <location>
        <begin position="104"/>
        <end position="118"/>
    </location>
</feature>
<protein>
    <recommendedName>
        <fullName evidence="4">Transcription factor phomD</fullName>
    </recommendedName>
    <alternativeName>
        <fullName evidence="4">Phomopsin biosynthesis cluster protein D</fullName>
    </alternativeName>
</protein>
<reference key="1">
    <citation type="journal article" date="2021" name="Angew. Chem. Int. Ed.">
        <title>Biosynthetic studies of phomopsins unveil posttranslational installation of dehydroamino acids by ustYa family proteins.</title>
        <authorList>
            <person name="Sogahata K."/>
            <person name="Ozaki T."/>
            <person name="Igarashi Y."/>
            <person name="Naganuma Y."/>
            <person name="Liu C."/>
            <person name="Minami A."/>
            <person name="Oikawa H."/>
        </authorList>
    </citation>
    <scope>NUCLEOTIDE SEQUENCE [GENOMIC DNA]</scope>
    <scope>FUNCTION</scope>
    <source>
        <strain>ATCC 26115 / IMI 115107 / C 1557</strain>
    </source>
</reference>
<organism>
    <name type="scientific">Diaporthe leptostromiformis</name>
    <name type="common">Lupinosis disease fungus</name>
    <name type="synonym">Phomopsis leptostromiformis</name>
    <dbReference type="NCBI Taxonomy" id="291059"/>
    <lineage>
        <taxon>Eukaryota</taxon>
        <taxon>Fungi</taxon>
        <taxon>Dikarya</taxon>
        <taxon>Ascomycota</taxon>
        <taxon>Pezizomycotina</taxon>
        <taxon>Sordariomycetes</taxon>
        <taxon>Sordariomycetidae</taxon>
        <taxon>Diaporthales</taxon>
        <taxon>Diaporthaceae</taxon>
        <taxon>Diaporthe</taxon>
    </lineage>
</organism>
<gene>
    <name evidence="4" type="primary">phomD</name>
</gene>
<dbReference type="EMBL" id="LC646903">
    <property type="protein sequence ID" value="BDA39135.1"/>
    <property type="molecule type" value="Genomic_DNA"/>
</dbReference>
<dbReference type="SMR" id="A0A8J9RRX1"/>
<dbReference type="GO" id="GO:0005634">
    <property type="term" value="C:nucleus"/>
    <property type="evidence" value="ECO:0007669"/>
    <property type="project" value="UniProtKB-SubCell"/>
</dbReference>
<dbReference type="GO" id="GO:0003677">
    <property type="term" value="F:DNA binding"/>
    <property type="evidence" value="ECO:0007669"/>
    <property type="project" value="UniProtKB-KW"/>
</dbReference>
<dbReference type="GO" id="GO:0000981">
    <property type="term" value="F:DNA-binding transcription factor activity, RNA polymerase II-specific"/>
    <property type="evidence" value="ECO:0007669"/>
    <property type="project" value="InterPro"/>
</dbReference>
<dbReference type="GO" id="GO:0008270">
    <property type="term" value="F:zinc ion binding"/>
    <property type="evidence" value="ECO:0007669"/>
    <property type="project" value="InterPro"/>
</dbReference>
<dbReference type="CDD" id="cd00067">
    <property type="entry name" value="GAL4"/>
    <property type="match status" value="1"/>
</dbReference>
<dbReference type="Gene3D" id="4.10.240.10">
    <property type="entry name" value="Zn(2)-C6 fungal-type DNA-binding domain"/>
    <property type="match status" value="1"/>
</dbReference>
<dbReference type="InterPro" id="IPR050675">
    <property type="entry name" value="OAF3"/>
</dbReference>
<dbReference type="InterPro" id="IPR036864">
    <property type="entry name" value="Zn2-C6_fun-type_DNA-bd_sf"/>
</dbReference>
<dbReference type="InterPro" id="IPR001138">
    <property type="entry name" value="Zn2Cys6_DnaBD"/>
</dbReference>
<dbReference type="PANTHER" id="PTHR31069:SF31">
    <property type="entry name" value="MONODICTYPHENONE CLUSTER TRANSCRIPTION FACTOR-RELATED"/>
    <property type="match status" value="1"/>
</dbReference>
<dbReference type="PANTHER" id="PTHR31069">
    <property type="entry name" value="OLEATE-ACTIVATED TRANSCRIPTION FACTOR 1-RELATED"/>
    <property type="match status" value="1"/>
</dbReference>
<dbReference type="Pfam" id="PF00172">
    <property type="entry name" value="Zn_clus"/>
    <property type="match status" value="1"/>
</dbReference>
<dbReference type="PRINTS" id="PR00755">
    <property type="entry name" value="AFLATOXINBRP"/>
</dbReference>
<dbReference type="SMART" id="SM00066">
    <property type="entry name" value="GAL4"/>
    <property type="match status" value="1"/>
</dbReference>
<dbReference type="SUPFAM" id="SSF57701">
    <property type="entry name" value="Zn2/Cys6 DNA-binding domain"/>
    <property type="match status" value="1"/>
</dbReference>
<dbReference type="PROSITE" id="PS50048">
    <property type="entry name" value="ZN2_CY6_FUNGAL_2"/>
    <property type="match status" value="1"/>
</dbReference>